<keyword id="KW-1072">Activation of host autophagy by virus</keyword>
<keyword id="KW-0175">Coiled coil</keyword>
<keyword id="KW-0244">Early protein</keyword>
<keyword id="KW-1035">Host cytoplasm</keyword>
<keyword id="KW-0945">Host-virus interaction</keyword>
<feature type="chain" id="PRO_0000373588" description="Uncharacterized protein K205R">
    <location>
        <begin position="1"/>
        <end position="209"/>
    </location>
</feature>
<feature type="region of interest" description="Disordered" evidence="3">
    <location>
        <begin position="107"/>
        <end position="135"/>
    </location>
</feature>
<feature type="coiled-coil region" evidence="2">
    <location>
        <begin position="13"/>
        <end position="75"/>
    </location>
</feature>
<feature type="compositionally biased region" description="Polar residues" evidence="3">
    <location>
        <begin position="110"/>
        <end position="119"/>
    </location>
</feature>
<feature type="compositionally biased region" description="Low complexity" evidence="3">
    <location>
        <begin position="120"/>
        <end position="133"/>
    </location>
</feature>
<sequence length="209" mass="24099">MVEPREQFFQDLLSAVDKQMDTVKNDIKDIMKEKTSFMASFENFIERYDTMEKNIQDLQNKYEEMAINLAAVMTDTKIQLGAIIAQLEILMINGTPLPAKKTTIKEATPLPSSNTNNEQSMSTYSSSISGKTSETVKKNPTNAMFFTRSEWASSKEFREKFLTPEIQAILDEQFANKTGIERLHAEGLYMWRTQFSDEQKKMVKEMMKK</sequence>
<name>VF205_ASFM2</name>
<comment type="function">
    <text evidence="1">Induces host endoplasmic reticulum stress and consequently activates autophagy and NF-kappa-B signaling pathway. In turn, may induce autophagy-mediated STING1 degradation and innate immune evasion.</text>
</comment>
<comment type="subcellular location">
    <subcellularLocation>
        <location evidence="1">Host cytoplasm</location>
    </subcellularLocation>
</comment>
<comment type="induction">
    <text evidence="4">Expressed in the early phase of the viral replicative cycle.</text>
</comment>
<comment type="similarity">
    <text evidence="4">Belongs to the asfivirus K205R family.</text>
</comment>
<reference key="1">
    <citation type="submission" date="2003-03" db="EMBL/GenBank/DDBJ databases">
        <title>African swine fever virus genomes.</title>
        <authorList>
            <person name="Kutish G.F."/>
            <person name="Rock D.L."/>
        </authorList>
    </citation>
    <scope>NUCLEOTIDE SEQUENCE [LARGE SCALE GENOMIC DNA]</scope>
</reference>
<gene>
    <name type="ordered locus">Mal-056</name>
</gene>
<organismHost>
    <name type="scientific">Ornithodoros</name>
    <name type="common">relapsing fever ticks</name>
    <dbReference type="NCBI Taxonomy" id="6937"/>
</organismHost>
<organismHost>
    <name type="scientific">Phacochoerus aethiopicus</name>
    <name type="common">Warthog</name>
    <dbReference type="NCBI Taxonomy" id="85517"/>
</organismHost>
<organismHost>
    <name type="scientific">Phacochoerus africanus</name>
    <name type="common">Warthog</name>
    <dbReference type="NCBI Taxonomy" id="41426"/>
</organismHost>
<organismHost>
    <name type="scientific">Potamochoerus larvatus</name>
    <name type="common">Bushpig</name>
    <dbReference type="NCBI Taxonomy" id="273792"/>
</organismHost>
<organismHost>
    <name type="scientific">Sus scrofa</name>
    <name type="common">Pig</name>
    <dbReference type="NCBI Taxonomy" id="9823"/>
</organismHost>
<dbReference type="EMBL" id="AY261361">
    <property type="status" value="NOT_ANNOTATED_CDS"/>
    <property type="molecule type" value="Genomic_DNA"/>
</dbReference>
<dbReference type="SMR" id="P0CA98"/>
<dbReference type="Proteomes" id="UP000000860">
    <property type="component" value="Segment"/>
</dbReference>
<dbReference type="GO" id="GO:0030430">
    <property type="term" value="C:host cell cytoplasm"/>
    <property type="evidence" value="ECO:0007669"/>
    <property type="project" value="UniProtKB-SubCell"/>
</dbReference>
<dbReference type="GO" id="GO:0039520">
    <property type="term" value="P:symbiont-mediated activation of host autophagy"/>
    <property type="evidence" value="ECO:0007669"/>
    <property type="project" value="UniProtKB-KW"/>
</dbReference>
<protein>
    <recommendedName>
        <fullName>Uncharacterized protein K205R</fullName>
        <shortName>pK205R</shortName>
    </recommendedName>
</protein>
<organism>
    <name type="scientific">African swine fever virus (isolate Tick/Malawi/Lil 20-1/1983)</name>
    <name type="common">ASFV</name>
    <dbReference type="NCBI Taxonomy" id="10500"/>
    <lineage>
        <taxon>Viruses</taxon>
        <taxon>Varidnaviria</taxon>
        <taxon>Bamfordvirae</taxon>
        <taxon>Nucleocytoviricota</taxon>
        <taxon>Pokkesviricetes</taxon>
        <taxon>Asfuvirales</taxon>
        <taxon>Asfarviridae</taxon>
        <taxon>Asfivirus</taxon>
        <taxon>African swine fever virus</taxon>
    </lineage>
</organism>
<proteinExistence type="inferred from homology"/>
<evidence type="ECO:0000250" key="1">
    <source>
        <dbReference type="UniProtKB" id="Q65147"/>
    </source>
</evidence>
<evidence type="ECO:0000255" key="2"/>
<evidence type="ECO:0000256" key="3">
    <source>
        <dbReference type="SAM" id="MobiDB-lite"/>
    </source>
</evidence>
<evidence type="ECO:0000305" key="4"/>
<accession>P0CA98</accession>